<dbReference type="EMBL" id="X04567">
    <property type="protein sequence ID" value="CAA28222.1"/>
    <property type="molecule type" value="Genomic_DNA"/>
</dbReference>
<dbReference type="EMBL" id="X04567">
    <property type="protein sequence ID" value="CAA28221.1"/>
    <property type="status" value="ALT_INIT"/>
    <property type="molecule type" value="Genomic_DNA"/>
</dbReference>
<dbReference type="EMBL" id="AF158101">
    <property type="protein sequence ID" value="AAD42677.1"/>
    <property type="molecule type" value="Genomic_DNA"/>
</dbReference>
<dbReference type="RefSeq" id="NP_049731.1">
    <property type="nucleotide sequence ID" value="NC_000866.4"/>
</dbReference>
<dbReference type="GeneID" id="1258716"/>
<dbReference type="KEGG" id="vg:1258716"/>
<dbReference type="OrthoDB" id="15259at10239"/>
<dbReference type="Proteomes" id="UP000009087">
    <property type="component" value="Segment"/>
</dbReference>
<proteinExistence type="predicted"/>
<keyword id="KW-1185">Reference proteome</keyword>
<reference key="1">
    <citation type="journal article" date="1986" name="Nucleic Acids Res.">
        <title>Nucleotide sequence and analysis of the 58.3 to 65.5-kb early region of bacteriophage T4.</title>
        <authorList>
            <person name="Valerie K."/>
            <person name="Stevens J."/>
            <person name="Lynch M."/>
            <person name="Henderson E.E."/>
            <person name="de Riel J.K."/>
        </authorList>
    </citation>
    <scope>NUCLEOTIDE SEQUENCE [GENOMIC DNA]</scope>
</reference>
<reference key="2">
    <citation type="journal article" date="2003" name="Microbiol. Mol. Biol. Rev.">
        <title>Bacteriophage T4 genome.</title>
        <authorList>
            <person name="Miller E.S."/>
            <person name="Kutter E."/>
            <person name="Mosig G."/>
            <person name="Arisaka F."/>
            <person name="Kunisawa T."/>
            <person name="Ruger W."/>
        </authorList>
    </citation>
    <scope>NUCLEOTIDE SEQUENCE [LARGE SCALE GENOMIC DNA]</scope>
</reference>
<feature type="chain" id="PRO_0000165141" description="Uncharacterized 12.8 kDa protein in regB-denV intergenic region">
    <location>
        <begin position="1"/>
        <end position="109"/>
    </location>
</feature>
<sequence length="109" mass="12835">MMTDTQLFEYLYFSPKTIKNKLVNHFEILAKNNILSEFYPKQYKLQKGVFKGCRVLCTAPNARLMNKIPYFTMEFIDGPFKGLITQSLMAYDSEPFLIKEQSWINLFSN</sequence>
<gene>
    <name type="primary">y06J</name>
    <name type="synonym">63.4</name>
    <name type="synonym">vs.7</name>
</gene>
<organism>
    <name type="scientific">Enterobacteria phage T4</name>
    <name type="common">Bacteriophage T4</name>
    <dbReference type="NCBI Taxonomy" id="10665"/>
    <lineage>
        <taxon>Viruses</taxon>
        <taxon>Duplodnaviria</taxon>
        <taxon>Heunggongvirae</taxon>
        <taxon>Uroviricota</taxon>
        <taxon>Caudoviricetes</taxon>
        <taxon>Straboviridae</taxon>
        <taxon>Tevenvirinae</taxon>
        <taxon>Tequatrovirus</taxon>
    </lineage>
</organism>
<accession>P13317</accession>
<evidence type="ECO:0000305" key="1"/>
<protein>
    <recommendedName>
        <fullName>Uncharacterized 12.8 kDa protein in regB-denV intergenic region</fullName>
    </recommendedName>
</protein>
<comment type="sequence caution" evidence="1">
    <conflict type="erroneous initiation">
        <sequence resource="EMBL-CDS" id="CAA28221"/>
    </conflict>
</comment>
<name>Y06J_BPT4</name>
<organismHost>
    <name type="scientific">Escherichia coli</name>
    <dbReference type="NCBI Taxonomy" id="562"/>
</organismHost>